<protein>
    <recommendedName>
        <fullName>Viral Fc-gamma receptor-like protein IR11</fullName>
    </recommendedName>
    <alternativeName>
        <fullName>gp34</fullName>
    </alternativeName>
</protein>
<keyword id="KW-0325">Glycoprotein</keyword>
<keyword id="KW-0393">Immunoglobulin domain</keyword>
<keyword id="KW-0472">Membrane</keyword>
<keyword id="KW-1185">Reference proteome</keyword>
<keyword id="KW-0732">Signal</keyword>
<keyword id="KW-0812">Transmembrane</keyword>
<keyword id="KW-1133">Transmembrane helix</keyword>
<accession>P16809</accession>
<accession>Q7M572</accession>
<proteinExistence type="inferred from homology"/>
<feature type="signal peptide" evidence="1">
    <location>
        <begin position="1"/>
        <end position="23"/>
    </location>
</feature>
<feature type="chain" id="PRO_0000037437" description="Viral Fc-gamma receptor-like protein IR11">
    <location>
        <begin position="24"/>
        <end position="234"/>
    </location>
</feature>
<feature type="topological domain" description="Extracellular" evidence="1">
    <location>
        <begin position="24"/>
        <end position="182"/>
    </location>
</feature>
<feature type="transmembrane region" description="Helical" evidence="1">
    <location>
        <begin position="183"/>
        <end position="203"/>
    </location>
</feature>
<feature type="topological domain" description="Cytoplasmic" evidence="1">
    <location>
        <begin position="204"/>
        <end position="234"/>
    </location>
</feature>
<feature type="domain" description="Ig-like V-type">
    <location>
        <begin position="24"/>
        <end position="122"/>
    </location>
</feature>
<feature type="glycosylation site" description="N-linked (GlcNAc...) asparagine; by host" evidence="1">
    <location>
        <position position="57"/>
    </location>
</feature>
<feature type="glycosylation site" description="N-linked (GlcNAc...) asparagine; by host" evidence="1">
    <location>
        <position position="105"/>
    </location>
</feature>
<feature type="glycosylation site" description="N-linked (GlcNAc...) asparagine; by host" evidence="1">
    <location>
        <position position="110"/>
    </location>
</feature>
<name>IR11_HCMVA</name>
<organismHost>
    <name type="scientific">Homo sapiens</name>
    <name type="common">Human</name>
    <dbReference type="NCBI Taxonomy" id="9606"/>
</organismHost>
<organism>
    <name type="scientific">Human cytomegalovirus (strain AD169)</name>
    <name type="common">HHV-5</name>
    <name type="synonym">Human herpesvirus 5</name>
    <dbReference type="NCBI Taxonomy" id="10360"/>
    <lineage>
        <taxon>Viruses</taxon>
        <taxon>Duplodnaviria</taxon>
        <taxon>Heunggongvirae</taxon>
        <taxon>Peploviricota</taxon>
        <taxon>Herviviricetes</taxon>
        <taxon>Herpesvirales</taxon>
        <taxon>Orthoherpesviridae</taxon>
        <taxon>Betaherpesvirinae</taxon>
        <taxon>Cytomegalovirus</taxon>
        <taxon>Cytomegalovirus humanbeta5</taxon>
        <taxon>Human cytomegalovirus</taxon>
    </lineage>
</organism>
<reference key="1">
    <citation type="journal article" date="1990" name="Curr. Top. Microbiol. Immunol.">
        <title>Analysis of the protein-coding content of the sequence of human cytomegalovirus strain AD169.</title>
        <authorList>
            <person name="Chee M.S."/>
            <person name="Bankier A.T."/>
            <person name="Beck S."/>
            <person name="Bohni R."/>
            <person name="Brown C.M."/>
            <person name="Cerny R."/>
            <person name="Horsnell T."/>
            <person name="Hutchison C.A. III"/>
            <person name="Kouzarides T."/>
            <person name="Martignetti J.A."/>
            <person name="Preddie E."/>
            <person name="Satchwell S.C."/>
            <person name="Tomlinson P."/>
            <person name="Weston K.M."/>
            <person name="Barrell B.G."/>
        </authorList>
    </citation>
    <scope>NUCLEOTIDE SEQUENCE [LARGE SCALE GENOMIC DNA]</scope>
</reference>
<reference key="2">
    <citation type="journal article" date="2002" name="J. Virol.">
        <title>Identification and expression of human cytomegalovirus transcription units coding for two distinct Fcgamma receptor homologs.</title>
        <authorList>
            <person name="Atalay R."/>
            <person name="Zimmermann A."/>
            <person name="Wagner M."/>
            <person name="Borst E."/>
            <person name="Benz C."/>
            <person name="Messerle M."/>
            <person name="Hengel H."/>
        </authorList>
    </citation>
    <scope>IDENTIFICATION</scope>
</reference>
<reference key="3">
    <citation type="journal article" date="2003" name="J. Gen. Virol.">
        <title>The human cytomegalovirus genome revisited: comparison with the chimpanzee cytomegalovirus genome.</title>
        <authorList>
            <person name="Davison A.J."/>
            <person name="Dolan A."/>
            <person name="Akter P."/>
            <person name="Addison C."/>
            <person name="Dargan D.J."/>
            <person name="Alcendor D.J."/>
            <person name="McGeoch D.J."/>
            <person name="Hayward G.S."/>
        </authorList>
    </citation>
    <scope>GENOME REANNOTATION</scope>
</reference>
<reference key="4">
    <citation type="journal article" date="2003" name="J. Gen. Virol.">
        <authorList>
            <person name="Davison A.J."/>
            <person name="Dolan A."/>
            <person name="Akter P."/>
            <person name="Addison C."/>
            <person name="Dargan D.J."/>
            <person name="Alcendor D.J."/>
            <person name="McGeoch D.J."/>
            <person name="Hayward G.S."/>
        </authorList>
    </citation>
    <scope>ERRATUM OF PUBMED:12533697</scope>
</reference>
<comment type="subcellular location">
    <subcellularLocation>
        <location evidence="2">Membrane</location>
        <topology evidence="2">Single-pass type I membrane protein</topology>
    </subcellularLocation>
</comment>
<comment type="similarity">
    <text evidence="2">Belongs to the RL11 family.</text>
</comment>
<evidence type="ECO:0000255" key="1"/>
<evidence type="ECO:0000305" key="2"/>
<sequence>MQTYSTPLTLVIVTSLFLFTTQGSSSNAVEPTKKPLKLANYRATCEDRTRTLVTRLNTSHHSVVWQRYDIYSRYMRRMPPLCIITDAYKETTRQGGAAFACTRQNLTLYNLTVKDTGVYLLQDQYTGDVEAFYLIIHPRSFCRALETRRCFYPGPGRVVVTDSQEADRAIISDLKRQWSGLSLHCAWVSGMMIFVGALVICFLRSQRIGEQDAEHLRTDLDTEPLLLTVDGDLQ</sequence>
<dbReference type="EMBL" id="X17403">
    <property type="protein sequence ID" value="CAA35459.1"/>
    <property type="molecule type" value="Genomic_DNA"/>
</dbReference>
<dbReference type="EMBL" id="X17403">
    <property type="protein sequence ID" value="CAA35299.1"/>
    <property type="molecule type" value="Genomic_DNA"/>
</dbReference>
<dbReference type="EMBL" id="BK000394">
    <property type="protein sequence ID" value="DAA00092.1"/>
    <property type="molecule type" value="Genomic_DNA"/>
</dbReference>
<dbReference type="EMBL" id="BK000394">
    <property type="protein sequence ID" value="DAA00229.1"/>
    <property type="molecule type" value="Genomic_DNA"/>
</dbReference>
<dbReference type="PIR" id="S09760">
    <property type="entry name" value="S09760"/>
</dbReference>
<dbReference type="Proteomes" id="UP000008991">
    <property type="component" value="Segment"/>
</dbReference>
<dbReference type="Proteomes" id="UP000008992">
    <property type="component" value="Segment"/>
</dbReference>
<dbReference type="GO" id="GO:0016020">
    <property type="term" value="C:membrane"/>
    <property type="evidence" value="ECO:0007669"/>
    <property type="project" value="UniProtKB-SubCell"/>
</dbReference>